<dbReference type="EC" id="5.3.1.23" evidence="1"/>
<dbReference type="EMBL" id="AM920689">
    <property type="protein sequence ID" value="CAP52048.1"/>
    <property type="status" value="ALT_INIT"/>
    <property type="molecule type" value="Genomic_DNA"/>
</dbReference>
<dbReference type="SMR" id="B0RUX9"/>
<dbReference type="KEGG" id="xca:xcc-b100_2687"/>
<dbReference type="HOGENOM" id="CLU_016218_1_2_6"/>
<dbReference type="UniPathway" id="UPA00904">
    <property type="reaction ID" value="UER00874"/>
</dbReference>
<dbReference type="Proteomes" id="UP000001188">
    <property type="component" value="Chromosome"/>
</dbReference>
<dbReference type="GO" id="GO:0046523">
    <property type="term" value="F:S-methyl-5-thioribose-1-phosphate isomerase activity"/>
    <property type="evidence" value="ECO:0007669"/>
    <property type="project" value="UniProtKB-UniRule"/>
</dbReference>
<dbReference type="GO" id="GO:0019509">
    <property type="term" value="P:L-methionine salvage from methylthioadenosine"/>
    <property type="evidence" value="ECO:0007669"/>
    <property type="project" value="UniProtKB-UniRule"/>
</dbReference>
<dbReference type="FunFam" id="1.20.120.420:FF:000007">
    <property type="entry name" value="Methylthioribose-1-phosphate isomerase"/>
    <property type="match status" value="1"/>
</dbReference>
<dbReference type="FunFam" id="3.40.50.10470:FF:000006">
    <property type="entry name" value="Methylthioribose-1-phosphate isomerase"/>
    <property type="match status" value="1"/>
</dbReference>
<dbReference type="Gene3D" id="1.20.120.420">
    <property type="entry name" value="translation initiation factor eif-2b, domain 1"/>
    <property type="match status" value="1"/>
</dbReference>
<dbReference type="Gene3D" id="3.40.50.10470">
    <property type="entry name" value="Translation initiation factor eif-2b, domain 2"/>
    <property type="match status" value="1"/>
</dbReference>
<dbReference type="HAMAP" id="MF_01678">
    <property type="entry name" value="Salvage_MtnA"/>
    <property type="match status" value="1"/>
</dbReference>
<dbReference type="InterPro" id="IPR000649">
    <property type="entry name" value="IF-2B-related"/>
</dbReference>
<dbReference type="InterPro" id="IPR005251">
    <property type="entry name" value="IF-M1Pi"/>
</dbReference>
<dbReference type="InterPro" id="IPR042529">
    <property type="entry name" value="IF_2B-like_C"/>
</dbReference>
<dbReference type="InterPro" id="IPR011559">
    <property type="entry name" value="Initiation_fac_2B_a/b/d"/>
</dbReference>
<dbReference type="InterPro" id="IPR027363">
    <property type="entry name" value="M1Pi_N"/>
</dbReference>
<dbReference type="InterPro" id="IPR037171">
    <property type="entry name" value="NagB/RpiA_transferase-like"/>
</dbReference>
<dbReference type="NCBIfam" id="TIGR00524">
    <property type="entry name" value="eIF-2B_rel"/>
    <property type="match status" value="1"/>
</dbReference>
<dbReference type="NCBIfam" id="NF004326">
    <property type="entry name" value="PRK05720.1"/>
    <property type="match status" value="1"/>
</dbReference>
<dbReference type="NCBIfam" id="TIGR00512">
    <property type="entry name" value="salvage_mtnA"/>
    <property type="match status" value="1"/>
</dbReference>
<dbReference type="PANTHER" id="PTHR43475">
    <property type="entry name" value="METHYLTHIORIBOSE-1-PHOSPHATE ISOMERASE"/>
    <property type="match status" value="1"/>
</dbReference>
<dbReference type="PANTHER" id="PTHR43475:SF1">
    <property type="entry name" value="METHYLTHIORIBOSE-1-PHOSPHATE ISOMERASE"/>
    <property type="match status" value="1"/>
</dbReference>
<dbReference type="Pfam" id="PF01008">
    <property type="entry name" value="IF-2B"/>
    <property type="match status" value="1"/>
</dbReference>
<dbReference type="SUPFAM" id="SSF100950">
    <property type="entry name" value="NagB/RpiA/CoA transferase-like"/>
    <property type="match status" value="1"/>
</dbReference>
<accession>B0RUX9</accession>
<sequence length="354" mass="37410">MNDSAHIDYARYDHIRPLLWTGDALELLDQRKLPFVVEHVRCDSSDAVAEAIHSLAVRGAPAIGIAAGWGVVLAAREIAADSGSEALQKLEPALLRLNAARPTAVNLAWALMRMRRVLAAAGPDWRDVLAREAQAIADEDLAANRHMGALGAGLIAPGSGVLTHCNTGSLATAGFGTALGVIRAGMAQQRISKVFAGETRPWLQGARLTVWELQQDGIDATLIADSAASHLMKSGLVQWVIVGADRICANGDTANKIGSYQLAIAARHHGVKFMVVAPSSTVDMATADGDQIEIEQRDPGELFGVGGVRTVADGIHAWNPVFDVTPGHLIDAIVTERGVIAQPDLARMQAAFGN</sequence>
<gene>
    <name evidence="1" type="primary">mtnA</name>
    <name type="ordered locus">xcc-b100_2687</name>
</gene>
<organism>
    <name type="scientific">Xanthomonas campestris pv. campestris (strain B100)</name>
    <dbReference type="NCBI Taxonomy" id="509169"/>
    <lineage>
        <taxon>Bacteria</taxon>
        <taxon>Pseudomonadati</taxon>
        <taxon>Pseudomonadota</taxon>
        <taxon>Gammaproteobacteria</taxon>
        <taxon>Lysobacterales</taxon>
        <taxon>Lysobacteraceae</taxon>
        <taxon>Xanthomonas</taxon>
    </lineage>
</organism>
<protein>
    <recommendedName>
        <fullName evidence="1">Methylthioribose-1-phosphate isomerase</fullName>
        <shortName evidence="1">M1Pi</shortName>
        <shortName evidence="1">MTR-1-P isomerase</shortName>
        <ecNumber evidence="1">5.3.1.23</ecNumber>
    </recommendedName>
    <alternativeName>
        <fullName evidence="1">S-methyl-5-thioribose-1-phosphate isomerase</fullName>
    </alternativeName>
</protein>
<reference key="1">
    <citation type="journal article" date="2008" name="J. Biotechnol.">
        <title>The genome of Xanthomonas campestris pv. campestris B100 and its use for the reconstruction of metabolic pathways involved in xanthan biosynthesis.</title>
        <authorList>
            <person name="Vorhoelter F.-J."/>
            <person name="Schneiker S."/>
            <person name="Goesmann A."/>
            <person name="Krause L."/>
            <person name="Bekel T."/>
            <person name="Kaiser O."/>
            <person name="Linke B."/>
            <person name="Patschkowski T."/>
            <person name="Rueckert C."/>
            <person name="Schmid J."/>
            <person name="Sidhu V.K."/>
            <person name="Sieber V."/>
            <person name="Tauch A."/>
            <person name="Watt S.A."/>
            <person name="Weisshaar B."/>
            <person name="Becker A."/>
            <person name="Niehaus K."/>
            <person name="Puehler A."/>
        </authorList>
    </citation>
    <scope>NUCLEOTIDE SEQUENCE [LARGE SCALE GENOMIC DNA]</scope>
    <source>
        <strain>B100</strain>
    </source>
</reference>
<proteinExistence type="inferred from homology"/>
<evidence type="ECO:0000255" key="1">
    <source>
        <dbReference type="HAMAP-Rule" id="MF_01678"/>
    </source>
</evidence>
<evidence type="ECO:0000305" key="2"/>
<comment type="function">
    <text evidence="1">Catalyzes the interconversion of methylthioribose-1-phosphate (MTR-1-P) into methylthioribulose-1-phosphate (MTRu-1-P).</text>
</comment>
<comment type="catalytic activity">
    <reaction evidence="1">
        <text>5-(methylsulfanyl)-alpha-D-ribose 1-phosphate = 5-(methylsulfanyl)-D-ribulose 1-phosphate</text>
        <dbReference type="Rhea" id="RHEA:19989"/>
        <dbReference type="ChEBI" id="CHEBI:58533"/>
        <dbReference type="ChEBI" id="CHEBI:58548"/>
        <dbReference type="EC" id="5.3.1.23"/>
    </reaction>
</comment>
<comment type="pathway">
    <text evidence="1">Amino-acid biosynthesis; L-methionine biosynthesis via salvage pathway; L-methionine from S-methyl-5-thio-alpha-D-ribose 1-phosphate: step 1/6.</text>
</comment>
<comment type="similarity">
    <text evidence="2">Belongs to the eIF-2B alpha/beta/delta subunits family. MtnA subfamily.</text>
</comment>
<comment type="sequence caution" evidence="2">
    <conflict type="erroneous initiation">
        <sequence resource="EMBL-CDS" id="CAP52048"/>
    </conflict>
</comment>
<feature type="chain" id="PRO_0000357270" description="Methylthioribose-1-phosphate isomerase">
    <location>
        <begin position="1"/>
        <end position="354"/>
    </location>
</feature>
<feature type="active site" description="Proton donor" evidence="1">
    <location>
        <position position="245"/>
    </location>
</feature>
<feature type="binding site" evidence="1">
    <location>
        <begin position="58"/>
        <end position="60"/>
    </location>
    <ligand>
        <name>substrate</name>
    </ligand>
</feature>
<feature type="binding site" evidence="1">
    <location>
        <position position="101"/>
    </location>
    <ligand>
        <name>substrate</name>
    </ligand>
</feature>
<feature type="binding site" evidence="1">
    <location>
        <position position="204"/>
    </location>
    <ligand>
        <name>substrate</name>
    </ligand>
</feature>
<feature type="binding site" evidence="1">
    <location>
        <begin position="255"/>
        <end position="256"/>
    </location>
    <ligand>
        <name>substrate</name>
    </ligand>
</feature>
<feature type="site" description="Transition state stabilizer" evidence="1">
    <location>
        <position position="165"/>
    </location>
</feature>
<keyword id="KW-0028">Amino-acid biosynthesis</keyword>
<keyword id="KW-0413">Isomerase</keyword>
<keyword id="KW-0486">Methionine biosynthesis</keyword>
<name>MTNA_XANCB</name>